<organism>
    <name type="scientific">Escherichia coli</name>
    <dbReference type="NCBI Taxonomy" id="562"/>
    <lineage>
        <taxon>Bacteria</taxon>
        <taxon>Pseudomonadati</taxon>
        <taxon>Pseudomonadota</taxon>
        <taxon>Gammaproteobacteria</taxon>
        <taxon>Enterobacterales</taxon>
        <taxon>Enterobacteriaceae</taxon>
        <taxon>Escherichia</taxon>
    </lineage>
</organism>
<geneLocation type="plasmid">
    <name>pBWH77</name>
</geneLocation>
<comment type="function">
    <text>This enzyme hydrolyzes cefotaxime, ceftazidime and other broad spectrum cephalosporins.</text>
</comment>
<comment type="catalytic activity">
    <reaction evidence="2">
        <text>a beta-lactam + H2O = a substituted beta-amino acid</text>
        <dbReference type="Rhea" id="RHEA:20401"/>
        <dbReference type="ChEBI" id="CHEBI:15377"/>
        <dbReference type="ChEBI" id="CHEBI:35627"/>
        <dbReference type="ChEBI" id="CHEBI:140347"/>
        <dbReference type="EC" id="3.5.2.6"/>
    </reaction>
</comment>
<comment type="miscellaneous">
    <text evidence="5">The class A beta-lactamase family has a specific amino-acid numbering system, sometimes called Ambler or ABL numbering and often misspelt as Amber. A multiple sequence alignment was used to derive a consensus sequence and then the consensus was numbered taking into account insertions and deletions. This allows use of identical numbers, e.g. for active site residues, despite differences in protein length. UniProt always uses natural numbering of residues, hence there appear to be differences in numbering between this entry and some papers.</text>
</comment>
<comment type="similarity">
    <text evidence="4">Belongs to the class-A beta-lactamase family.</text>
</comment>
<feature type="signal peptide" evidence="3">
    <location>
        <begin position="1"/>
        <end position="21"/>
    </location>
</feature>
<feature type="chain" id="PRO_0000016981" description="Beta-lactamase SHV-2">
    <location>
        <begin position="22"/>
        <end position="286"/>
    </location>
</feature>
<feature type="active site" description="Acyl-ester intermediate" evidence="2">
    <location>
        <position position="66"/>
    </location>
</feature>
<feature type="active site" description="Proton acceptor" evidence="1">
    <location>
        <position position="164"/>
    </location>
</feature>
<feature type="binding site" evidence="1">
    <location>
        <begin position="230"/>
        <end position="232"/>
    </location>
    <ligand>
        <name>substrate</name>
    </ligand>
</feature>
<feature type="disulfide bond" evidence="1">
    <location>
        <begin position="73"/>
        <end position="119"/>
    </location>
</feature>
<protein>
    <recommendedName>
        <fullName>Beta-lactamase SHV-2</fullName>
        <ecNumber>3.5.2.6</ecNumber>
    </recommendedName>
    <alternativeName>
        <fullName>SHV-2A</fullName>
    </alternativeName>
</protein>
<evidence type="ECO:0000250" key="1"/>
<evidence type="ECO:0000255" key="2">
    <source>
        <dbReference type="PROSITE-ProRule" id="PRU10101"/>
    </source>
</evidence>
<evidence type="ECO:0000269" key="3">
    <source>
    </source>
</evidence>
<evidence type="ECO:0000305" key="4"/>
<evidence type="ECO:0000305" key="5">
    <source>
    </source>
</evidence>
<keyword id="KW-0046">Antibiotic resistance</keyword>
<keyword id="KW-0903">Direct protein sequencing</keyword>
<keyword id="KW-1015">Disulfide bond</keyword>
<keyword id="KW-0378">Hydrolase</keyword>
<keyword id="KW-0614">Plasmid</keyword>
<keyword id="KW-0732">Signal</keyword>
<accession>P0A9Z7</accession>
<accession>P14558</accession>
<gene>
    <name type="primary">bla</name>
    <name type="synonym">shv2</name>
</gene>
<proteinExistence type="evidence at protein level"/>
<dbReference type="EC" id="3.5.2.6"/>
<dbReference type="EMBL" id="AF148851">
    <property type="protein sequence ID" value="AAD37413.1"/>
    <property type="molecule type" value="Genomic_DNA"/>
</dbReference>
<dbReference type="PIR" id="S02434">
    <property type="entry name" value="S02434"/>
</dbReference>
<dbReference type="SMR" id="P0A9Z7"/>
<dbReference type="DrugBank" id="DB09060">
    <property type="generic name" value="Avibactam"/>
</dbReference>
<dbReference type="DrugBank" id="DB03472">
    <property type="generic name" value="Cyclohexyl-Hexyl-Beta-D-Maltoside"/>
</dbReference>
<dbReference type="KEGG" id="ag:AAD37413"/>
<dbReference type="GO" id="GO:0008800">
    <property type="term" value="F:beta-lactamase activity"/>
    <property type="evidence" value="ECO:0007669"/>
    <property type="project" value="UniProtKB-EC"/>
</dbReference>
<dbReference type="GO" id="GO:0030655">
    <property type="term" value="P:beta-lactam antibiotic catabolic process"/>
    <property type="evidence" value="ECO:0007669"/>
    <property type="project" value="InterPro"/>
</dbReference>
<dbReference type="GO" id="GO:0046677">
    <property type="term" value="P:response to antibiotic"/>
    <property type="evidence" value="ECO:0007669"/>
    <property type="project" value="UniProtKB-KW"/>
</dbReference>
<dbReference type="Gene3D" id="3.40.710.10">
    <property type="entry name" value="DD-peptidase/beta-lactamase superfamily"/>
    <property type="match status" value="1"/>
</dbReference>
<dbReference type="InterPro" id="IPR012338">
    <property type="entry name" value="Beta-lactam/transpept-like"/>
</dbReference>
<dbReference type="InterPro" id="IPR045155">
    <property type="entry name" value="Beta-lactam_cat"/>
</dbReference>
<dbReference type="InterPro" id="IPR000871">
    <property type="entry name" value="Beta-lactam_class-A"/>
</dbReference>
<dbReference type="InterPro" id="IPR023650">
    <property type="entry name" value="Beta-lactam_class-A_AS"/>
</dbReference>
<dbReference type="NCBIfam" id="NF033103">
    <property type="entry name" value="bla_class_A"/>
    <property type="match status" value="1"/>
</dbReference>
<dbReference type="NCBIfam" id="NF000285">
    <property type="entry name" value="SHV"/>
    <property type="match status" value="1"/>
</dbReference>
<dbReference type="NCBIfam" id="NF012143">
    <property type="entry name" value="SHV_LEN_OKP"/>
    <property type="match status" value="1"/>
</dbReference>
<dbReference type="PANTHER" id="PTHR35333">
    <property type="entry name" value="BETA-LACTAMASE"/>
    <property type="match status" value="1"/>
</dbReference>
<dbReference type="PANTHER" id="PTHR35333:SF3">
    <property type="entry name" value="BETA-LACTAMASE-TYPE TRANSPEPTIDASE FOLD CONTAINING PROTEIN"/>
    <property type="match status" value="1"/>
</dbReference>
<dbReference type="Pfam" id="PF13354">
    <property type="entry name" value="Beta-lactamase2"/>
    <property type="match status" value="1"/>
</dbReference>
<dbReference type="PRINTS" id="PR00118">
    <property type="entry name" value="BLACTAMASEA"/>
</dbReference>
<dbReference type="SUPFAM" id="SSF56601">
    <property type="entry name" value="beta-lactamase/transpeptidase-like"/>
    <property type="match status" value="1"/>
</dbReference>
<dbReference type="PROSITE" id="PS00146">
    <property type="entry name" value="BETA_LACTAMASE_A"/>
    <property type="match status" value="1"/>
</dbReference>
<sequence length="286" mass="31254">MRYIRLCIISLLATLPLAVHASPQPLEQIKLSESQLSGRVGMIEMDLASGRTLTAWRADERFPMMSTFKVVLCGAVLARVDAGDEQLERKIHYRQQDLVDYSPVSEKHLADGMTVGELCAAAITMSDNSAANLLLATVGGPAGLTAFLRQIGDNVTRLDRWETELNEALPGDARDTTTPASMAATLRKLLTSQRLSARSQRQLLQWMVDDRVAGPLIRSVLPAGWFIADKTGASERGARGIVALLGPNNKAERIVVIYLRDTPASMAERNQQIAGIGAALIEHWQR</sequence>
<reference key="1">
    <citation type="journal article" date="1999" name="Antimicrob. Agents Chemother.">
        <title>Automated thermal cycling is superior to traditional methods for nucleotide sequencing of bla(SHV) genes.</title>
        <authorList>
            <person name="Bradford P.A."/>
        </authorList>
    </citation>
    <scope>NUCLEOTIDE SEQUENCE [GENOMIC DNA]</scope>
    <source>
        <strain>ATCC BAA-204 / JC2926 pBP60-1</strain>
    </source>
</reference>
<reference key="2">
    <citation type="journal article" date="1988" name="FEBS Lett.">
        <title>Single amino acid substitution between SHV-1 beta-lactamase and cefotaxime-hydrolyzing SHV-2 enzyme.</title>
        <authorList>
            <person name="Barthelemy M."/>
            <person name="Peduzzi J."/>
            <person name="Yaghlane H.B."/>
            <person name="Labia R."/>
        </authorList>
    </citation>
    <scope>PROTEIN SEQUENCE OF 22-286</scope>
    <source>
        <strain>A2302</strain>
        <plasmid>pBWH77</plasmid>
    </source>
</reference>
<reference key="3">
    <citation type="journal article" date="1991" name="Biochem. J.">
        <title>A standard numbering scheme for the class A beta-lactamases.</title>
        <authorList>
            <person name="Ambler R.P."/>
            <person name="Coulson A.F."/>
            <person name="Frere J.M."/>
            <person name="Ghuysen J.M."/>
            <person name="Joris B."/>
            <person name="Forsman M."/>
            <person name="Levesque R.C."/>
            <person name="Tiraby G."/>
            <person name="Waley S.G."/>
        </authorList>
    </citation>
    <scope>AMINO ACID NUMBERING SCHEME</scope>
</reference>
<name>BLA2_ECOLX</name>